<evidence type="ECO:0000250" key="1"/>
<evidence type="ECO:0000269" key="2">
    <source>
    </source>
</evidence>
<evidence type="ECO:0000305" key="3"/>
<sequence>MSWQTYVDDHLMCDIEGNHLSSAAILGHDGTVWAQSPSFPQLKPEEVSAIMKDFNEPGSLAPTGLHLGGTKYMVIQGEPGDVIRGKKGPGGVTIKKTNQALIIGIYGEPMTPGQCNMVVERIGDYLVEQGM</sequence>
<accession>Q84V37</accession>
<organism>
    <name type="scientific">Chenopodium album</name>
    <name type="common">Fat hen</name>
    <dbReference type="NCBI Taxonomy" id="3559"/>
    <lineage>
        <taxon>Eukaryota</taxon>
        <taxon>Viridiplantae</taxon>
        <taxon>Streptophyta</taxon>
        <taxon>Embryophyta</taxon>
        <taxon>Tracheophyta</taxon>
        <taxon>Spermatophyta</taxon>
        <taxon>Magnoliopsida</taxon>
        <taxon>eudicotyledons</taxon>
        <taxon>Gunneridae</taxon>
        <taxon>Pentapetalae</taxon>
        <taxon>Caryophyllales</taxon>
        <taxon>Chenopodiaceae</taxon>
        <taxon>Chenopodioideae</taxon>
        <taxon>Atripliceae</taxon>
        <taxon>Chenopodium</taxon>
    </lineage>
</organism>
<feature type="initiator methionine" description="Removed" evidence="1">
    <location>
        <position position="1"/>
    </location>
</feature>
<feature type="chain" id="PRO_0000199625" description="Profilin">
    <location>
        <begin position="2"/>
        <end position="131"/>
    </location>
</feature>
<comment type="function">
    <text evidence="1">Binds to actin and affects the structure of the cytoskeleton. At high concentrations, profilin prevents the polymerization of actin, whereas it enhances it at low concentrations. By binding to PIP2, it inhibits the formation of IP3 and DG (By similarity).</text>
</comment>
<comment type="subunit">
    <text>Occurs in many kinds of cells as a complex with monomeric actin in a 1:1 ratio.</text>
</comment>
<comment type="subcellular location">
    <subcellularLocation>
        <location evidence="1">Cytoplasm</location>
        <location evidence="1">Cytoskeleton</location>
    </subcellularLocation>
</comment>
<comment type="allergen">
    <text evidence="2">Causes an allergic reaction in human. Binds to IgE.</text>
</comment>
<comment type="similarity">
    <text evidence="3">Belongs to the profilin family.</text>
</comment>
<protein>
    <recommendedName>
        <fullName>Profilin</fullName>
    </recommendedName>
    <alternativeName>
        <fullName>Minor pollen allergen Che a 2</fullName>
    </alternativeName>
    <allergenName>Che a 2</allergenName>
</protein>
<name>PROF_CHEAL</name>
<reference key="1">
    <citation type="journal article" date="2004" name="J. Allergy Clin. Immunol.">
        <title>Profilin (Che a 2) and polcalcin (Che a 3) are relevant allergens of Chenopodium album pollen: isolation, amino acid sequences, and immunologic properties.</title>
        <authorList>
            <person name="Barderas R."/>
            <person name="Villalba M."/>
            <person name="Pascual C.Y."/>
            <person name="Batanero E."/>
            <person name="Rodriguez R."/>
        </authorList>
    </citation>
    <scope>NUCLEOTIDE SEQUENCE [MRNA]</scope>
    <scope>ALLERGEN</scope>
    <source>
        <tissue>Pollen</tissue>
    </source>
</reference>
<dbReference type="EMBL" id="AY082337">
    <property type="protein sequence ID" value="AAL92870.1"/>
    <property type="molecule type" value="mRNA"/>
</dbReference>
<dbReference type="SMR" id="Q84V37"/>
<dbReference type="Allergome" id="1068">
    <property type="allergen name" value="Che a 2"/>
</dbReference>
<dbReference type="Allergome" id="3189">
    <property type="allergen name" value="Che a 2.0101"/>
</dbReference>
<dbReference type="GO" id="GO:0005938">
    <property type="term" value="C:cell cortex"/>
    <property type="evidence" value="ECO:0007669"/>
    <property type="project" value="TreeGrafter"/>
</dbReference>
<dbReference type="GO" id="GO:0005856">
    <property type="term" value="C:cytoskeleton"/>
    <property type="evidence" value="ECO:0007669"/>
    <property type="project" value="UniProtKB-SubCell"/>
</dbReference>
<dbReference type="GO" id="GO:0003785">
    <property type="term" value="F:actin monomer binding"/>
    <property type="evidence" value="ECO:0007669"/>
    <property type="project" value="TreeGrafter"/>
</dbReference>
<dbReference type="CDD" id="cd00148">
    <property type="entry name" value="PROF"/>
    <property type="match status" value="1"/>
</dbReference>
<dbReference type="FunFam" id="3.30.450.30:FF:000001">
    <property type="entry name" value="Profilin"/>
    <property type="match status" value="1"/>
</dbReference>
<dbReference type="Gene3D" id="3.30.450.30">
    <property type="entry name" value="Dynein light chain 2a, cytoplasmic"/>
    <property type="match status" value="1"/>
</dbReference>
<dbReference type="InterPro" id="IPR048278">
    <property type="entry name" value="PFN"/>
</dbReference>
<dbReference type="InterPro" id="IPR005455">
    <property type="entry name" value="PFN_euk"/>
</dbReference>
<dbReference type="InterPro" id="IPR036140">
    <property type="entry name" value="PFN_sf"/>
</dbReference>
<dbReference type="InterPro" id="IPR027310">
    <property type="entry name" value="Profilin_CS"/>
</dbReference>
<dbReference type="PANTHER" id="PTHR11604">
    <property type="entry name" value="PROFILIN"/>
    <property type="match status" value="1"/>
</dbReference>
<dbReference type="PANTHER" id="PTHR11604:SF49">
    <property type="entry name" value="PROFILIN-2"/>
    <property type="match status" value="1"/>
</dbReference>
<dbReference type="Pfam" id="PF00235">
    <property type="entry name" value="Profilin"/>
    <property type="match status" value="1"/>
</dbReference>
<dbReference type="PRINTS" id="PR00392">
    <property type="entry name" value="PROFILIN"/>
</dbReference>
<dbReference type="PRINTS" id="PR01640">
    <property type="entry name" value="PROFILINPLNT"/>
</dbReference>
<dbReference type="SMART" id="SM00392">
    <property type="entry name" value="PROF"/>
    <property type="match status" value="1"/>
</dbReference>
<dbReference type="SUPFAM" id="SSF55770">
    <property type="entry name" value="Profilin (actin-binding protein)"/>
    <property type="match status" value="1"/>
</dbReference>
<dbReference type="PROSITE" id="PS00414">
    <property type="entry name" value="PROFILIN"/>
    <property type="match status" value="1"/>
</dbReference>
<keyword id="KW-0009">Actin-binding</keyword>
<keyword id="KW-0020">Allergen</keyword>
<keyword id="KW-0963">Cytoplasm</keyword>
<keyword id="KW-0206">Cytoskeleton</keyword>
<proteinExistence type="evidence at protein level"/>